<accession>Q82WL2</accession>
<proteinExistence type="inferred from homology"/>
<comment type="function">
    <text evidence="1">Catalyzes the formation of S-adenosylmethionine (AdoMet) from methionine and ATP. The overall synthetic reaction is composed of two sequential steps, AdoMet formation and the subsequent tripolyphosphate hydrolysis which occurs prior to release of AdoMet from the enzyme.</text>
</comment>
<comment type="catalytic activity">
    <reaction evidence="1">
        <text>L-methionine + ATP + H2O = S-adenosyl-L-methionine + phosphate + diphosphate</text>
        <dbReference type="Rhea" id="RHEA:21080"/>
        <dbReference type="ChEBI" id="CHEBI:15377"/>
        <dbReference type="ChEBI" id="CHEBI:30616"/>
        <dbReference type="ChEBI" id="CHEBI:33019"/>
        <dbReference type="ChEBI" id="CHEBI:43474"/>
        <dbReference type="ChEBI" id="CHEBI:57844"/>
        <dbReference type="ChEBI" id="CHEBI:59789"/>
        <dbReference type="EC" id="2.5.1.6"/>
    </reaction>
</comment>
<comment type="cofactor">
    <cofactor evidence="1">
        <name>Mg(2+)</name>
        <dbReference type="ChEBI" id="CHEBI:18420"/>
    </cofactor>
    <text evidence="1">Binds 2 divalent ions per subunit.</text>
</comment>
<comment type="cofactor">
    <cofactor evidence="1">
        <name>K(+)</name>
        <dbReference type="ChEBI" id="CHEBI:29103"/>
    </cofactor>
    <text evidence="1">Binds 1 potassium ion per subunit.</text>
</comment>
<comment type="pathway">
    <text evidence="1">Amino-acid biosynthesis; S-adenosyl-L-methionine biosynthesis; S-adenosyl-L-methionine from L-methionine: step 1/1.</text>
</comment>
<comment type="subunit">
    <text evidence="1">Homotetramer; dimer of dimers.</text>
</comment>
<comment type="subcellular location">
    <subcellularLocation>
        <location evidence="1">Cytoplasm</location>
    </subcellularLocation>
</comment>
<comment type="similarity">
    <text evidence="1">Belongs to the AdoMet synthase family.</text>
</comment>
<sequence>MSNYLFTSESVSEGHPDKVADQISDAILDAILQQDPHARVACETMCSTGLIVLSGEITTDATIDYNAIPRGIVREIGYTSSEIGFDASTCAVLTAFNKQSPDIAQGVNRSKDEEMDQGAGDQGLMFGYACDETPQLMPLPIYYAHRLVEQQAKLRKSGRLSWLRPDAKSQVSVRYEDGFPKNIETIVISTQHSPDVPRDELVEGVIEEVIKPVLPAEMLSNHIQYLINPTGRFVVGGPMGDCGLTGRKIIVDTYGGTAHHGGGAFSGKDPSKVDRSAAYAARYVAKNIVAAGLARKCEVQVAYAIGVAKPVSLMVQTFGTGKIPDGKLAELIARHFDLRPRAIIHELDLLRPIYGKTAAYGHFGREEPSFTWEKTDMAEQLKADAGI</sequence>
<organism>
    <name type="scientific">Nitrosomonas europaea (strain ATCC 19718 / CIP 103999 / KCTC 2705 / NBRC 14298)</name>
    <dbReference type="NCBI Taxonomy" id="228410"/>
    <lineage>
        <taxon>Bacteria</taxon>
        <taxon>Pseudomonadati</taxon>
        <taxon>Pseudomonadota</taxon>
        <taxon>Betaproteobacteria</taxon>
        <taxon>Nitrosomonadales</taxon>
        <taxon>Nitrosomonadaceae</taxon>
        <taxon>Nitrosomonas</taxon>
    </lineage>
</organism>
<keyword id="KW-0067">ATP-binding</keyword>
<keyword id="KW-0963">Cytoplasm</keyword>
<keyword id="KW-0460">Magnesium</keyword>
<keyword id="KW-0479">Metal-binding</keyword>
<keyword id="KW-0547">Nucleotide-binding</keyword>
<keyword id="KW-0554">One-carbon metabolism</keyword>
<keyword id="KW-0630">Potassium</keyword>
<keyword id="KW-1185">Reference proteome</keyword>
<keyword id="KW-0808">Transferase</keyword>
<reference key="1">
    <citation type="journal article" date="2003" name="J. Bacteriol.">
        <title>Complete genome sequence of the ammonia-oxidizing bacterium and obligate chemolithoautotroph Nitrosomonas europaea.</title>
        <authorList>
            <person name="Chain P."/>
            <person name="Lamerdin J.E."/>
            <person name="Larimer F.W."/>
            <person name="Regala W."/>
            <person name="Lao V."/>
            <person name="Land M.L."/>
            <person name="Hauser L."/>
            <person name="Hooper A.B."/>
            <person name="Klotz M.G."/>
            <person name="Norton J."/>
            <person name="Sayavedra-Soto L.A."/>
            <person name="Arciero D.M."/>
            <person name="Hommes N.G."/>
            <person name="Whittaker M.M."/>
            <person name="Arp D.J."/>
        </authorList>
    </citation>
    <scope>NUCLEOTIDE SEQUENCE [LARGE SCALE GENOMIC DNA]</scope>
    <source>
        <strain>ATCC 19718 / CIP 103999 / KCTC 2705 / NBRC 14298</strain>
    </source>
</reference>
<name>METK_NITEU</name>
<dbReference type="EC" id="2.5.1.6" evidence="1"/>
<dbReference type="EMBL" id="AL954747">
    <property type="protein sequence ID" value="CAD84570.1"/>
    <property type="molecule type" value="Genomic_DNA"/>
</dbReference>
<dbReference type="RefSeq" id="WP_011111282.1">
    <property type="nucleotide sequence ID" value="NC_004757.1"/>
</dbReference>
<dbReference type="SMR" id="Q82WL2"/>
<dbReference type="STRING" id="228410.NE0659"/>
<dbReference type="GeneID" id="87103856"/>
<dbReference type="KEGG" id="neu:NE0659"/>
<dbReference type="eggNOG" id="COG0192">
    <property type="taxonomic scope" value="Bacteria"/>
</dbReference>
<dbReference type="HOGENOM" id="CLU_041802_1_1_4"/>
<dbReference type="OrthoDB" id="9801686at2"/>
<dbReference type="PhylomeDB" id="Q82WL2"/>
<dbReference type="UniPathway" id="UPA00315">
    <property type="reaction ID" value="UER00080"/>
</dbReference>
<dbReference type="Proteomes" id="UP000001416">
    <property type="component" value="Chromosome"/>
</dbReference>
<dbReference type="GO" id="GO:0005737">
    <property type="term" value="C:cytoplasm"/>
    <property type="evidence" value="ECO:0007669"/>
    <property type="project" value="UniProtKB-SubCell"/>
</dbReference>
<dbReference type="GO" id="GO:0005524">
    <property type="term" value="F:ATP binding"/>
    <property type="evidence" value="ECO:0007669"/>
    <property type="project" value="UniProtKB-UniRule"/>
</dbReference>
<dbReference type="GO" id="GO:0000287">
    <property type="term" value="F:magnesium ion binding"/>
    <property type="evidence" value="ECO:0007669"/>
    <property type="project" value="UniProtKB-UniRule"/>
</dbReference>
<dbReference type="GO" id="GO:0004478">
    <property type="term" value="F:methionine adenosyltransferase activity"/>
    <property type="evidence" value="ECO:0007669"/>
    <property type="project" value="UniProtKB-UniRule"/>
</dbReference>
<dbReference type="GO" id="GO:0006730">
    <property type="term" value="P:one-carbon metabolic process"/>
    <property type="evidence" value="ECO:0007669"/>
    <property type="project" value="UniProtKB-KW"/>
</dbReference>
<dbReference type="GO" id="GO:0006556">
    <property type="term" value="P:S-adenosylmethionine biosynthetic process"/>
    <property type="evidence" value="ECO:0007669"/>
    <property type="project" value="UniProtKB-UniRule"/>
</dbReference>
<dbReference type="CDD" id="cd18079">
    <property type="entry name" value="S-AdoMet_synt"/>
    <property type="match status" value="1"/>
</dbReference>
<dbReference type="FunFam" id="3.30.300.10:FF:000003">
    <property type="entry name" value="S-adenosylmethionine synthase"/>
    <property type="match status" value="1"/>
</dbReference>
<dbReference type="FunFam" id="3.30.300.10:FF:000004">
    <property type="entry name" value="S-adenosylmethionine synthase"/>
    <property type="match status" value="1"/>
</dbReference>
<dbReference type="Gene3D" id="3.30.300.10">
    <property type="match status" value="3"/>
</dbReference>
<dbReference type="HAMAP" id="MF_00086">
    <property type="entry name" value="S_AdoMet_synth1"/>
    <property type="match status" value="1"/>
</dbReference>
<dbReference type="InterPro" id="IPR022631">
    <property type="entry name" value="ADOMET_SYNTHASE_CS"/>
</dbReference>
<dbReference type="InterPro" id="IPR022630">
    <property type="entry name" value="S-AdoMet_synt_C"/>
</dbReference>
<dbReference type="InterPro" id="IPR022629">
    <property type="entry name" value="S-AdoMet_synt_central"/>
</dbReference>
<dbReference type="InterPro" id="IPR022628">
    <property type="entry name" value="S-AdoMet_synt_N"/>
</dbReference>
<dbReference type="InterPro" id="IPR002133">
    <property type="entry name" value="S-AdoMet_synthetase"/>
</dbReference>
<dbReference type="InterPro" id="IPR022636">
    <property type="entry name" value="S-AdoMet_synthetase_sfam"/>
</dbReference>
<dbReference type="NCBIfam" id="TIGR01034">
    <property type="entry name" value="metK"/>
    <property type="match status" value="1"/>
</dbReference>
<dbReference type="PANTHER" id="PTHR11964">
    <property type="entry name" value="S-ADENOSYLMETHIONINE SYNTHETASE"/>
    <property type="match status" value="1"/>
</dbReference>
<dbReference type="Pfam" id="PF02773">
    <property type="entry name" value="S-AdoMet_synt_C"/>
    <property type="match status" value="1"/>
</dbReference>
<dbReference type="Pfam" id="PF02772">
    <property type="entry name" value="S-AdoMet_synt_M"/>
    <property type="match status" value="1"/>
</dbReference>
<dbReference type="Pfam" id="PF00438">
    <property type="entry name" value="S-AdoMet_synt_N"/>
    <property type="match status" value="1"/>
</dbReference>
<dbReference type="PIRSF" id="PIRSF000497">
    <property type="entry name" value="MAT"/>
    <property type="match status" value="1"/>
</dbReference>
<dbReference type="SUPFAM" id="SSF55973">
    <property type="entry name" value="S-adenosylmethionine synthetase"/>
    <property type="match status" value="3"/>
</dbReference>
<dbReference type="PROSITE" id="PS00376">
    <property type="entry name" value="ADOMET_SYNTHASE_1"/>
    <property type="match status" value="1"/>
</dbReference>
<dbReference type="PROSITE" id="PS00377">
    <property type="entry name" value="ADOMET_SYNTHASE_2"/>
    <property type="match status" value="1"/>
</dbReference>
<gene>
    <name evidence="1" type="primary">metK</name>
    <name type="ordered locus">NE0659</name>
</gene>
<protein>
    <recommendedName>
        <fullName evidence="1">S-adenosylmethionine synthase</fullName>
        <shortName evidence="1">AdoMet synthase</shortName>
        <ecNumber evidence="1">2.5.1.6</ecNumber>
    </recommendedName>
    <alternativeName>
        <fullName evidence="1">MAT</fullName>
    </alternativeName>
    <alternativeName>
        <fullName evidence="1">Methionine adenosyltransferase</fullName>
    </alternativeName>
</protein>
<evidence type="ECO:0000255" key="1">
    <source>
        <dbReference type="HAMAP-Rule" id="MF_00086"/>
    </source>
</evidence>
<feature type="chain" id="PRO_0000174561" description="S-adenosylmethionine synthase">
    <location>
        <begin position="1"/>
        <end position="387"/>
    </location>
</feature>
<feature type="region of interest" description="Flexible loop" evidence="1">
    <location>
        <begin position="99"/>
        <end position="109"/>
    </location>
</feature>
<feature type="binding site" description="in other chain" evidence="1">
    <location>
        <position position="15"/>
    </location>
    <ligand>
        <name>ATP</name>
        <dbReference type="ChEBI" id="CHEBI:30616"/>
        <note>ligand shared between two neighboring subunits</note>
    </ligand>
</feature>
<feature type="binding site" evidence="1">
    <location>
        <position position="17"/>
    </location>
    <ligand>
        <name>Mg(2+)</name>
        <dbReference type="ChEBI" id="CHEBI:18420"/>
    </ligand>
</feature>
<feature type="binding site" evidence="1">
    <location>
        <position position="43"/>
    </location>
    <ligand>
        <name>K(+)</name>
        <dbReference type="ChEBI" id="CHEBI:29103"/>
    </ligand>
</feature>
<feature type="binding site" description="in other chain" evidence="1">
    <location>
        <position position="56"/>
    </location>
    <ligand>
        <name>L-methionine</name>
        <dbReference type="ChEBI" id="CHEBI:57844"/>
        <note>ligand shared between two neighboring subunits</note>
    </ligand>
</feature>
<feature type="binding site" description="in other chain" evidence="1">
    <location>
        <position position="99"/>
    </location>
    <ligand>
        <name>L-methionine</name>
        <dbReference type="ChEBI" id="CHEBI:57844"/>
        <note>ligand shared between two neighboring subunits</note>
    </ligand>
</feature>
<feature type="binding site" description="in other chain" evidence="1">
    <location>
        <begin position="166"/>
        <end position="168"/>
    </location>
    <ligand>
        <name>ATP</name>
        <dbReference type="ChEBI" id="CHEBI:30616"/>
        <note>ligand shared between two neighboring subunits</note>
    </ligand>
</feature>
<feature type="binding site" description="in other chain" evidence="1">
    <location>
        <begin position="232"/>
        <end position="233"/>
    </location>
    <ligand>
        <name>ATP</name>
        <dbReference type="ChEBI" id="CHEBI:30616"/>
        <note>ligand shared between two neighboring subunits</note>
    </ligand>
</feature>
<feature type="binding site" evidence="1">
    <location>
        <position position="241"/>
    </location>
    <ligand>
        <name>ATP</name>
        <dbReference type="ChEBI" id="CHEBI:30616"/>
        <note>ligand shared between two neighboring subunits</note>
    </ligand>
</feature>
<feature type="binding site" evidence="1">
    <location>
        <position position="241"/>
    </location>
    <ligand>
        <name>L-methionine</name>
        <dbReference type="ChEBI" id="CHEBI:57844"/>
        <note>ligand shared between two neighboring subunits</note>
    </ligand>
</feature>
<feature type="binding site" description="in other chain" evidence="1">
    <location>
        <begin position="247"/>
        <end position="248"/>
    </location>
    <ligand>
        <name>ATP</name>
        <dbReference type="ChEBI" id="CHEBI:30616"/>
        <note>ligand shared between two neighboring subunits</note>
    </ligand>
</feature>
<feature type="binding site" evidence="1">
    <location>
        <position position="264"/>
    </location>
    <ligand>
        <name>ATP</name>
        <dbReference type="ChEBI" id="CHEBI:30616"/>
        <note>ligand shared between two neighboring subunits</note>
    </ligand>
</feature>
<feature type="binding site" evidence="1">
    <location>
        <position position="268"/>
    </location>
    <ligand>
        <name>ATP</name>
        <dbReference type="ChEBI" id="CHEBI:30616"/>
        <note>ligand shared between two neighboring subunits</note>
    </ligand>
</feature>
<feature type="binding site" description="in other chain" evidence="1">
    <location>
        <position position="272"/>
    </location>
    <ligand>
        <name>L-methionine</name>
        <dbReference type="ChEBI" id="CHEBI:57844"/>
        <note>ligand shared between two neighboring subunits</note>
    </ligand>
</feature>